<reference key="1">
    <citation type="journal article" date="2002" name="Plant Cell Physiol.">
        <title>Cell wall invertase in developing rice caryopsis: molecular cloning of OsCIN1 and analysis of its expression in relation to its role in grain filling.</title>
        <authorList>
            <person name="Hirose T."/>
            <person name="Takano M."/>
            <person name="Terao T."/>
        </authorList>
    </citation>
    <scope>NUCLEOTIDE SEQUENCE [MRNA]</scope>
    <scope>TISSUE SPECIFICITY</scope>
    <scope>DEVELOPMENTAL STAGE</scope>
    <source>
        <strain>cv. Nipponbare</strain>
        <tissue>Panicle</tissue>
    </source>
</reference>
<reference key="2">
    <citation type="journal article" date="2005" name="Plant Cell Rep.">
        <title>Molecular cloning and expression analysis of the cell-wall invertase gene family in rice (Oryza sativa L.).</title>
        <authorList>
            <person name="Cho J.-I."/>
            <person name="Lee S.-K."/>
            <person name="Ko S."/>
            <person name="Kim H.-K."/>
            <person name="Jun S.-H."/>
            <person name="Lee Y.-H."/>
            <person name="Bhoo S.H."/>
            <person name="Lee K.-W."/>
            <person name="An G."/>
            <person name="Hahn T.-R."/>
            <person name="Jeon J.-S."/>
        </authorList>
    </citation>
    <scope>NUCLEOTIDE SEQUENCE [MRNA]</scope>
    <scope>TISSUE SPECIFICITY</scope>
    <scope>DEVELOPMENTAL STAGE</scope>
    <scope>INDUCTION</scope>
    <source>
        <strain>cv. Nipponbare</strain>
    </source>
</reference>
<reference key="3">
    <citation type="journal article" date="2005" name="Nature">
        <title>The map-based sequence of the rice genome.</title>
        <authorList>
            <consortium name="International rice genome sequencing project (IRGSP)"/>
        </authorList>
    </citation>
    <scope>NUCLEOTIDE SEQUENCE [LARGE SCALE GENOMIC DNA]</scope>
    <source>
        <strain>cv. Nipponbare</strain>
    </source>
</reference>
<reference key="4">
    <citation type="journal article" date="2008" name="Nucleic Acids Res.">
        <title>The rice annotation project database (RAP-DB): 2008 update.</title>
        <authorList>
            <consortium name="The rice annotation project (RAP)"/>
        </authorList>
    </citation>
    <scope>GENOME REANNOTATION</scope>
    <source>
        <strain>cv. Nipponbare</strain>
    </source>
</reference>
<reference key="5">
    <citation type="journal article" date="2013" name="Rice">
        <title>Improvement of the Oryza sativa Nipponbare reference genome using next generation sequence and optical map data.</title>
        <authorList>
            <person name="Kawahara Y."/>
            <person name="de la Bastide M."/>
            <person name="Hamilton J.P."/>
            <person name="Kanamori H."/>
            <person name="McCombie W.R."/>
            <person name="Ouyang S."/>
            <person name="Schwartz D.C."/>
            <person name="Tanaka T."/>
            <person name="Wu J."/>
            <person name="Zhou S."/>
            <person name="Childs K.L."/>
            <person name="Davidson R.M."/>
            <person name="Lin H."/>
            <person name="Quesada-Ocampo L."/>
            <person name="Vaillancourt B."/>
            <person name="Sakai H."/>
            <person name="Lee S.S."/>
            <person name="Kim J."/>
            <person name="Numa H."/>
            <person name="Itoh T."/>
            <person name="Buell C.R."/>
            <person name="Matsumoto T."/>
        </authorList>
    </citation>
    <scope>GENOME REANNOTATION</scope>
    <source>
        <strain>cv. Nipponbare</strain>
    </source>
</reference>
<reference key="6">
    <citation type="journal article" date="2005" name="Plant Cell Physiol.">
        <title>Expression patterns of genes encoding carbohydrate-metabolizing enzymes and their relationship to grain filling in rice (Oryza sativa L.): comparison of caryopses located at different positions in a panicle.</title>
        <authorList>
            <person name="Ishimaru T."/>
            <person name="Hirose T."/>
            <person name="Matsuda T."/>
            <person name="Goto A."/>
            <person name="Takahashi K."/>
            <person name="Sasaki H."/>
            <person name="Terao T."/>
            <person name="Ishii R."/>
            <person name="Ohsugi R."/>
            <person name="Yamagishi T."/>
        </authorList>
    </citation>
    <scope>DEVELOPMENTAL STAGE</scope>
</reference>
<accession>Q0E0P0</accession>
<accession>A0A0P0VK46</accession>
<accession>Q6EU76</accession>
<accession>Q6VEF4</accession>
<accession>Q8S922</accession>
<feature type="signal peptide" evidence="1">
    <location>
        <begin position="1"/>
        <end position="22"/>
    </location>
</feature>
<feature type="chain" id="PRO_0000033379" description="Beta-fructofuranosidase, insoluble isoenzyme 1">
    <location>
        <begin position="23"/>
        <end position="577"/>
    </location>
</feature>
<feature type="active site" evidence="2">
    <location>
        <position position="63"/>
    </location>
</feature>
<feature type="glycosylation site" description="N-linked (GlcNAc...) asparagine" evidence="1">
    <location>
        <position position="158"/>
    </location>
</feature>
<feature type="glycosylation site" description="N-linked (GlcNAc...) asparagine" evidence="1">
    <location>
        <position position="183"/>
    </location>
</feature>
<feature type="glycosylation site" description="N-linked (GlcNAc...) asparagine" evidence="1">
    <location>
        <position position="333"/>
    </location>
</feature>
<feature type="sequence conflict" description="In Ref. 1; BAB90855." evidence="6" ref="1">
    <original>D</original>
    <variation>N</variation>
    <location>
        <position position="428"/>
    </location>
</feature>
<feature type="sequence conflict" description="In Ref. 1; BAB90855." evidence="6" ref="1">
    <original>K</original>
    <variation>E</variation>
    <location>
        <position position="475"/>
    </location>
</feature>
<sequence length="577" mass="63984">MGTRLLALAPWLLLLLLQLAGASHVVHRSLEAEQAPSSVPASIVSPLLRTGYHFQPPMNWINDPNGPLYYKGWYHLFYQYNPKGAVWGNIVWAHSVSQDLINWIALEPAIKPDIPSDQYGCWSGSATILPDGTPAILYTGIDRPNINYQVQNIAFPKNASDPLLREWVKPAYNPVATPEPGMNATQFRDPTTAWYADGHWRMLVGGLKGARLGLAYLYRSRDFKTWVRAKHPLHSALTGMWECPDFFPLQAPGLQAGLDTSVPSSKYVLKNSLDLTRYDYYTVGIYNKVTERYVPDNPAGDYHRLRYDYGNFYASKTFFDPVKHRRILLGWANESDSVTYDKAKGWAGIHAIPRKVWLDPSGKQLLQWPIEELETLRGKSVSVFDKVVKPGEHFQVTGLGTYQADVEVSLEVSGLEKAEALDPAFGDDAERLCGAKGADVRGGVVFGLWVLASAGLEEKTAVFFRVFKPAGHGAKPVVLMCTDPTKSSLSPDLYKPTFAGFVDTDISSGKISLRSLIDRSVVESFGAGGKTCILSRVYPSMAIGDKAHLYVFNNGEADIKISHLKAWEMKKPLMNGA</sequence>
<protein>
    <recommendedName>
        <fullName>Beta-fructofuranosidase, insoluble isoenzyme 1</fullName>
        <ecNumber>3.2.1.26</ecNumber>
    </recommendedName>
    <alternativeName>
        <fullName>Cell wall beta-fructosidase 1</fullName>
    </alternativeName>
    <alternativeName>
        <fullName>Invertase 1</fullName>
    </alternativeName>
    <alternativeName>
        <fullName>OsCIN1</fullName>
    </alternativeName>
    <alternativeName>
        <fullName>Sucrose hydrolase 1</fullName>
    </alternativeName>
</protein>
<keyword id="KW-0052">Apoplast</keyword>
<keyword id="KW-0134">Cell wall</keyword>
<keyword id="KW-0325">Glycoprotein</keyword>
<keyword id="KW-0326">Glycosidase</keyword>
<keyword id="KW-0378">Hydrolase</keyword>
<keyword id="KW-1185">Reference proteome</keyword>
<keyword id="KW-0964">Secreted</keyword>
<keyword id="KW-0732">Signal</keyword>
<proteinExistence type="evidence at transcript level"/>
<evidence type="ECO:0000255" key="1"/>
<evidence type="ECO:0000255" key="2">
    <source>
        <dbReference type="PROSITE-ProRule" id="PRU10067"/>
    </source>
</evidence>
<evidence type="ECO:0000269" key="3">
    <source>
    </source>
</evidence>
<evidence type="ECO:0000269" key="4">
    <source>
    </source>
</evidence>
<evidence type="ECO:0000269" key="5">
    <source>
    </source>
</evidence>
<evidence type="ECO:0000305" key="6"/>
<comment type="function">
    <text>May play a role in sucrose partitioning during seed development and in stress response.</text>
</comment>
<comment type="catalytic activity">
    <reaction evidence="2">
        <text>Hydrolysis of terminal non-reducing beta-D-fructofuranoside residues in beta-D-fructofuranosides.</text>
        <dbReference type="EC" id="3.2.1.26"/>
    </reaction>
</comment>
<comment type="subcellular location">
    <subcellularLocation>
        <location evidence="6">Secreted</location>
        <location evidence="6">Extracellular space</location>
        <location evidence="6">Apoplast</location>
    </subcellularLocation>
    <subcellularLocation>
        <location evidence="6">Secreted</location>
        <location evidence="6">Cell wall</location>
    </subcellularLocation>
    <text evidence="6">Associated to the cell wall.</text>
</comment>
<comment type="tissue specificity">
    <text evidence="3 5">Expressed in roots, leaves and flowers. Weakly expressed in seeds.</text>
</comment>
<comment type="developmental stage">
    <text evidence="3 4 5">Expressed from 1 to 3 days after flowering mainly in the maternal tissues of the developing caryopsis, corresponding to the early grain filling stage.</text>
</comment>
<comment type="induction">
    <text evidence="5">By sugar in excised leaves. By rice blast fungus (M.grisea) 4 hours after infection.</text>
</comment>
<comment type="similarity">
    <text evidence="6">Belongs to the glycosyl hydrolase 32 family.</text>
</comment>
<gene>
    <name type="primary">CIN1</name>
    <name type="ordered locus">Os02g0534400</name>
    <name type="ordered locus">LOC_Os02g33110</name>
    <name type="ORF">B1136H02.14</name>
    <name type="ORF">OJ1112_G07.1</name>
</gene>
<name>INV1_ORYSJ</name>
<dbReference type="EC" id="3.2.1.26"/>
<dbReference type="EMBL" id="AB073749">
    <property type="protein sequence ID" value="BAB90855.1"/>
    <property type="molecule type" value="mRNA"/>
</dbReference>
<dbReference type="EMBL" id="AY578158">
    <property type="protein sequence ID" value="AAT84401.1"/>
    <property type="molecule type" value="mRNA"/>
</dbReference>
<dbReference type="EMBL" id="AP004156">
    <property type="protein sequence ID" value="BAD27793.1"/>
    <property type="molecule type" value="Genomic_DNA"/>
</dbReference>
<dbReference type="EMBL" id="AP005798">
    <property type="protein sequence ID" value="BAD29294.1"/>
    <property type="molecule type" value="Genomic_DNA"/>
</dbReference>
<dbReference type="EMBL" id="AP008208">
    <property type="protein sequence ID" value="BAF08948.1"/>
    <property type="molecule type" value="Genomic_DNA"/>
</dbReference>
<dbReference type="EMBL" id="AP014958">
    <property type="protein sequence ID" value="BAS79053.1"/>
    <property type="molecule type" value="Genomic_DNA"/>
</dbReference>
<dbReference type="RefSeq" id="XP_015625273.1">
    <property type="nucleotide sequence ID" value="XM_015769787.1"/>
</dbReference>
<dbReference type="SMR" id="Q0E0P0"/>
<dbReference type="FunCoup" id="Q0E0P0">
    <property type="interactions" value="172"/>
</dbReference>
<dbReference type="STRING" id="39947.Q0E0P0"/>
<dbReference type="CAZy" id="GH32">
    <property type="family name" value="Glycoside Hydrolase Family 32"/>
</dbReference>
<dbReference type="GlyCosmos" id="Q0E0P0">
    <property type="glycosylation" value="3 sites, No reported glycans"/>
</dbReference>
<dbReference type="PaxDb" id="39947-Q0E0P0"/>
<dbReference type="EnsemblPlants" id="Os02t0534400-01">
    <property type="protein sequence ID" value="Os02t0534400-01"/>
    <property type="gene ID" value="Os02g0534400"/>
</dbReference>
<dbReference type="Gramene" id="Os02t0534400-01">
    <property type="protein sequence ID" value="Os02t0534400-01"/>
    <property type="gene ID" value="Os02g0534400"/>
</dbReference>
<dbReference type="KEGG" id="dosa:Os02g0534400"/>
<dbReference type="eggNOG" id="KOG0228">
    <property type="taxonomic scope" value="Eukaryota"/>
</dbReference>
<dbReference type="HOGENOM" id="CLU_001528_6_0_1"/>
<dbReference type="InParanoid" id="Q0E0P0"/>
<dbReference type="OMA" id="NWMALDP"/>
<dbReference type="OrthoDB" id="202537at2759"/>
<dbReference type="Proteomes" id="UP000000763">
    <property type="component" value="Chromosome 2"/>
</dbReference>
<dbReference type="Proteomes" id="UP000059680">
    <property type="component" value="Chromosome 2"/>
</dbReference>
<dbReference type="GO" id="GO:0048046">
    <property type="term" value="C:apoplast"/>
    <property type="evidence" value="ECO:0007669"/>
    <property type="project" value="UniProtKB-SubCell"/>
</dbReference>
<dbReference type="GO" id="GO:0004564">
    <property type="term" value="F:beta-fructofuranosidase activity"/>
    <property type="evidence" value="ECO:0007669"/>
    <property type="project" value="UniProtKB-EC"/>
</dbReference>
<dbReference type="GO" id="GO:0005975">
    <property type="term" value="P:carbohydrate metabolic process"/>
    <property type="evidence" value="ECO:0007669"/>
    <property type="project" value="InterPro"/>
</dbReference>
<dbReference type="CDD" id="cd18624">
    <property type="entry name" value="GH32_Fruct1-like"/>
    <property type="match status" value="1"/>
</dbReference>
<dbReference type="FunFam" id="2.115.10.20:FF:000001">
    <property type="entry name" value="Beta-fructofuranosidase, insoluble isoenzyme CWINV1"/>
    <property type="match status" value="1"/>
</dbReference>
<dbReference type="FunFam" id="2.60.120.560:FF:000002">
    <property type="entry name" value="Beta-fructofuranosidase, insoluble isoenzyme CWINV1"/>
    <property type="match status" value="1"/>
</dbReference>
<dbReference type="Gene3D" id="2.60.120.560">
    <property type="entry name" value="Exo-inulinase, domain 1"/>
    <property type="match status" value="1"/>
</dbReference>
<dbReference type="Gene3D" id="2.115.10.20">
    <property type="entry name" value="Glycosyl hydrolase domain, family 43"/>
    <property type="match status" value="1"/>
</dbReference>
<dbReference type="InterPro" id="IPR013320">
    <property type="entry name" value="ConA-like_dom_sf"/>
</dbReference>
<dbReference type="InterPro" id="IPR050551">
    <property type="entry name" value="Fructan_Metab_Enzymes"/>
</dbReference>
<dbReference type="InterPro" id="IPR001362">
    <property type="entry name" value="Glyco_hydro_32"/>
</dbReference>
<dbReference type="InterPro" id="IPR018053">
    <property type="entry name" value="Glyco_hydro_32_AS"/>
</dbReference>
<dbReference type="InterPro" id="IPR013189">
    <property type="entry name" value="Glyco_hydro_32_C"/>
</dbReference>
<dbReference type="InterPro" id="IPR013148">
    <property type="entry name" value="Glyco_hydro_32_N"/>
</dbReference>
<dbReference type="InterPro" id="IPR023296">
    <property type="entry name" value="Glyco_hydro_beta-prop_sf"/>
</dbReference>
<dbReference type="PANTHER" id="PTHR31953">
    <property type="entry name" value="BETA-FRUCTOFURANOSIDASE, INSOLUBLE ISOENZYME CWINV1-RELATED"/>
    <property type="match status" value="1"/>
</dbReference>
<dbReference type="Pfam" id="PF08244">
    <property type="entry name" value="Glyco_hydro_32C"/>
    <property type="match status" value="1"/>
</dbReference>
<dbReference type="Pfam" id="PF00251">
    <property type="entry name" value="Glyco_hydro_32N"/>
    <property type="match status" value="1"/>
</dbReference>
<dbReference type="SMART" id="SM00640">
    <property type="entry name" value="Glyco_32"/>
    <property type="match status" value="1"/>
</dbReference>
<dbReference type="SUPFAM" id="SSF75005">
    <property type="entry name" value="Arabinanase/levansucrase/invertase"/>
    <property type="match status" value="1"/>
</dbReference>
<dbReference type="SUPFAM" id="SSF49899">
    <property type="entry name" value="Concanavalin A-like lectins/glucanases"/>
    <property type="match status" value="1"/>
</dbReference>
<dbReference type="PROSITE" id="PS00609">
    <property type="entry name" value="GLYCOSYL_HYDROL_F32"/>
    <property type="match status" value="1"/>
</dbReference>
<organism>
    <name type="scientific">Oryza sativa subsp. japonica</name>
    <name type="common">Rice</name>
    <dbReference type="NCBI Taxonomy" id="39947"/>
    <lineage>
        <taxon>Eukaryota</taxon>
        <taxon>Viridiplantae</taxon>
        <taxon>Streptophyta</taxon>
        <taxon>Embryophyta</taxon>
        <taxon>Tracheophyta</taxon>
        <taxon>Spermatophyta</taxon>
        <taxon>Magnoliopsida</taxon>
        <taxon>Liliopsida</taxon>
        <taxon>Poales</taxon>
        <taxon>Poaceae</taxon>
        <taxon>BOP clade</taxon>
        <taxon>Oryzoideae</taxon>
        <taxon>Oryzeae</taxon>
        <taxon>Oryzinae</taxon>
        <taxon>Oryza</taxon>
        <taxon>Oryza sativa</taxon>
    </lineage>
</organism>